<accession>A5IRC6</accession>
<proteinExistence type="inferred from homology"/>
<name>MNHE1_STAA9</name>
<dbReference type="EMBL" id="CP000703">
    <property type="protein sequence ID" value="ABQ48749.1"/>
    <property type="molecule type" value="Genomic_DNA"/>
</dbReference>
<dbReference type="RefSeq" id="WP_000290674.1">
    <property type="nucleotide sequence ID" value="NC_009487.1"/>
</dbReference>
<dbReference type="SMR" id="A5IRC6"/>
<dbReference type="KEGG" id="saj:SaurJH9_0948"/>
<dbReference type="HOGENOM" id="CLU_086615_3_2_9"/>
<dbReference type="GO" id="GO:0005886">
    <property type="term" value="C:plasma membrane"/>
    <property type="evidence" value="ECO:0007669"/>
    <property type="project" value="UniProtKB-SubCell"/>
</dbReference>
<dbReference type="GO" id="GO:0015297">
    <property type="term" value="F:antiporter activity"/>
    <property type="evidence" value="ECO:0007669"/>
    <property type="project" value="UniProtKB-KW"/>
</dbReference>
<dbReference type="GO" id="GO:0008324">
    <property type="term" value="F:monoatomic cation transmembrane transporter activity"/>
    <property type="evidence" value="ECO:0007669"/>
    <property type="project" value="InterPro"/>
</dbReference>
<dbReference type="GO" id="GO:1902600">
    <property type="term" value="P:proton transmembrane transport"/>
    <property type="evidence" value="ECO:0007669"/>
    <property type="project" value="UniProtKB-KW"/>
</dbReference>
<dbReference type="GO" id="GO:0006814">
    <property type="term" value="P:sodium ion transport"/>
    <property type="evidence" value="ECO:0007669"/>
    <property type="project" value="UniProtKB-KW"/>
</dbReference>
<dbReference type="InterPro" id="IPR004847">
    <property type="entry name" value="Antiport_suE1"/>
</dbReference>
<dbReference type="InterPro" id="IPR002758">
    <property type="entry name" value="Cation_antiport_E"/>
</dbReference>
<dbReference type="NCBIfam" id="TIGR00942">
    <property type="entry name" value="2a6301s05"/>
    <property type="match status" value="1"/>
</dbReference>
<dbReference type="NCBIfam" id="NF009291">
    <property type="entry name" value="PRK12651.1-1"/>
    <property type="match status" value="1"/>
</dbReference>
<dbReference type="PANTHER" id="PTHR34584">
    <property type="entry name" value="NA(+)/H(+) ANTIPORTER SUBUNIT E1"/>
    <property type="match status" value="1"/>
</dbReference>
<dbReference type="PANTHER" id="PTHR34584:SF1">
    <property type="entry name" value="NA(+)_H(+) ANTIPORTER SUBUNIT E1"/>
    <property type="match status" value="1"/>
</dbReference>
<dbReference type="Pfam" id="PF01899">
    <property type="entry name" value="MNHE"/>
    <property type="match status" value="1"/>
</dbReference>
<dbReference type="PIRSF" id="PIRSF019239">
    <property type="entry name" value="MrpE"/>
    <property type="match status" value="1"/>
</dbReference>
<protein>
    <recommendedName>
        <fullName>Na(+)/H(+) antiporter subunit E1</fullName>
    </recommendedName>
    <alternativeName>
        <fullName>Mnh complex subunit E1</fullName>
    </alternativeName>
</protein>
<reference key="1">
    <citation type="submission" date="2007-05" db="EMBL/GenBank/DDBJ databases">
        <title>Complete sequence of chromosome of Staphylococcus aureus subsp. aureus JH9.</title>
        <authorList>
            <consortium name="US DOE Joint Genome Institute"/>
            <person name="Copeland A."/>
            <person name="Lucas S."/>
            <person name="Lapidus A."/>
            <person name="Barry K."/>
            <person name="Detter J.C."/>
            <person name="Glavina del Rio T."/>
            <person name="Hammon N."/>
            <person name="Israni S."/>
            <person name="Pitluck S."/>
            <person name="Chain P."/>
            <person name="Malfatti S."/>
            <person name="Shin M."/>
            <person name="Vergez L."/>
            <person name="Schmutz J."/>
            <person name="Larimer F."/>
            <person name="Land M."/>
            <person name="Hauser L."/>
            <person name="Kyrpides N."/>
            <person name="Kim E."/>
            <person name="Tomasz A."/>
            <person name="Richardson P."/>
        </authorList>
    </citation>
    <scope>NUCLEOTIDE SEQUENCE [LARGE SCALE GENOMIC DNA]</scope>
    <source>
        <strain>JH9</strain>
    </source>
</reference>
<sequence>MAVQLVLNFIIAVFWLFVTNSYTTNNFVLGFIFGLVLVYLLHRVLPGRFYVITLYRIIKLVIIFLIELIKANFDVLKIIIKPSIKNEPGFFVYHTDLKKDWQIVLLSNLITLTPGTVVLGVSDDRTKIYIHAIDFSTKEQEVESIKTSLEKIVREVGEI</sequence>
<gene>
    <name type="primary">mnhE1</name>
    <name type="ordered locus">SaurJH9_0948</name>
</gene>
<organism>
    <name type="scientific">Staphylococcus aureus (strain JH9)</name>
    <dbReference type="NCBI Taxonomy" id="359786"/>
    <lineage>
        <taxon>Bacteria</taxon>
        <taxon>Bacillati</taxon>
        <taxon>Bacillota</taxon>
        <taxon>Bacilli</taxon>
        <taxon>Bacillales</taxon>
        <taxon>Staphylococcaceae</taxon>
        <taxon>Staphylococcus</taxon>
    </lineage>
</organism>
<feature type="chain" id="PRO_0000372143" description="Na(+)/H(+) antiporter subunit E1">
    <location>
        <begin position="1"/>
        <end position="159"/>
    </location>
</feature>
<feature type="transmembrane region" description="Helical" evidence="2">
    <location>
        <begin position="1"/>
        <end position="21"/>
    </location>
</feature>
<feature type="transmembrane region" description="Helical" evidence="2">
    <location>
        <begin position="27"/>
        <end position="47"/>
    </location>
</feature>
<feature type="transmembrane region" description="Helical" evidence="2">
    <location>
        <begin position="49"/>
        <end position="69"/>
    </location>
</feature>
<feature type="transmembrane region" description="Helical" evidence="2">
    <location>
        <begin position="101"/>
        <end position="121"/>
    </location>
</feature>
<evidence type="ECO:0000250" key="1"/>
<evidence type="ECO:0000255" key="2"/>
<evidence type="ECO:0000305" key="3"/>
<comment type="function">
    <text evidence="1">Mnh complex is a Na(+)/H(+) antiporter involved in Na(+) excretion.</text>
</comment>
<comment type="subunit">
    <text evidence="1">May form a heterooligomeric complex that consists of seven subunits: mnhA1, mnhB1, mnhC1, mnhD1, mnhE1, mnhF1 and mnhG1.</text>
</comment>
<comment type="subcellular location">
    <subcellularLocation>
        <location evidence="3">Cell membrane</location>
        <topology evidence="3">Multi-pass membrane protein</topology>
    </subcellularLocation>
</comment>
<comment type="similarity">
    <text evidence="3">Belongs to the CPA3 antiporters (TC 2.A.63) subunit E family.</text>
</comment>
<keyword id="KW-0050">Antiport</keyword>
<keyword id="KW-1003">Cell membrane</keyword>
<keyword id="KW-0375">Hydrogen ion transport</keyword>
<keyword id="KW-0406">Ion transport</keyword>
<keyword id="KW-0472">Membrane</keyword>
<keyword id="KW-0915">Sodium</keyword>
<keyword id="KW-0739">Sodium transport</keyword>
<keyword id="KW-0812">Transmembrane</keyword>
<keyword id="KW-1133">Transmembrane helix</keyword>
<keyword id="KW-0813">Transport</keyword>